<sequence>MKRAVVVFSGGQDSTTCLVQALQQYDEVHCVTFDYGQRHRAEIDVARELALKLGARAHKVLDVTLLNELAVSSLTRDSIPVPDYEPEADGIPNTFVPGRNILFLTLAAIYAYQVKAEAVITGVCETDFSGYPDCRDEFVKALNHAVSLGMAKDIRFETPLMWIDKAETWALADYYGKLDLVRNETLTCYNGIKGDGCGHCAACNLRANGLNHYLADKPTVMAAMKQKTGLK</sequence>
<name>QUEC_ECOL6</name>
<feature type="chain" id="PRO_0000246842" description="7-cyano-7-deazaguanine synthase">
    <location>
        <begin position="1"/>
        <end position="231"/>
    </location>
</feature>
<feature type="binding site" evidence="1">
    <location>
        <begin position="8"/>
        <end position="18"/>
    </location>
    <ligand>
        <name>ATP</name>
        <dbReference type="ChEBI" id="CHEBI:30616"/>
    </ligand>
</feature>
<feature type="binding site" evidence="1">
    <location>
        <position position="188"/>
    </location>
    <ligand>
        <name>Zn(2+)</name>
        <dbReference type="ChEBI" id="CHEBI:29105"/>
    </ligand>
</feature>
<feature type="binding site" evidence="1">
    <location>
        <position position="197"/>
    </location>
    <ligand>
        <name>Zn(2+)</name>
        <dbReference type="ChEBI" id="CHEBI:29105"/>
    </ligand>
</feature>
<feature type="binding site" evidence="1">
    <location>
        <position position="200"/>
    </location>
    <ligand>
        <name>Zn(2+)</name>
        <dbReference type="ChEBI" id="CHEBI:29105"/>
    </ligand>
</feature>
<feature type="binding site" evidence="1">
    <location>
        <position position="203"/>
    </location>
    <ligand>
        <name>Zn(2+)</name>
        <dbReference type="ChEBI" id="CHEBI:29105"/>
    </ligand>
</feature>
<proteinExistence type="inferred from homology"/>
<gene>
    <name evidence="1" type="primary">queC</name>
    <name type="ordered locus">c0560</name>
</gene>
<reference key="1">
    <citation type="journal article" date="2002" name="Proc. Natl. Acad. Sci. U.S.A.">
        <title>Extensive mosaic structure revealed by the complete genome sequence of uropathogenic Escherichia coli.</title>
        <authorList>
            <person name="Welch R.A."/>
            <person name="Burland V."/>
            <person name="Plunkett G. III"/>
            <person name="Redford P."/>
            <person name="Roesch P."/>
            <person name="Rasko D."/>
            <person name="Buckles E.L."/>
            <person name="Liou S.-R."/>
            <person name="Boutin A."/>
            <person name="Hackett J."/>
            <person name="Stroud D."/>
            <person name="Mayhew G.F."/>
            <person name="Rose D.J."/>
            <person name="Zhou S."/>
            <person name="Schwartz D.C."/>
            <person name="Perna N.T."/>
            <person name="Mobley H.L.T."/>
            <person name="Donnenberg M.S."/>
            <person name="Blattner F.R."/>
        </authorList>
    </citation>
    <scope>NUCLEOTIDE SEQUENCE [LARGE SCALE GENOMIC DNA]</scope>
    <source>
        <strain>CFT073 / ATCC 700928 / UPEC</strain>
    </source>
</reference>
<keyword id="KW-0067">ATP-binding</keyword>
<keyword id="KW-0436">Ligase</keyword>
<keyword id="KW-0479">Metal-binding</keyword>
<keyword id="KW-0547">Nucleotide-binding</keyword>
<keyword id="KW-0671">Queuosine biosynthesis</keyword>
<keyword id="KW-1185">Reference proteome</keyword>
<keyword id="KW-0862">Zinc</keyword>
<protein>
    <recommendedName>
        <fullName evidence="1">7-cyano-7-deazaguanine synthase</fullName>
        <ecNumber evidence="1">6.3.4.20</ecNumber>
    </recommendedName>
    <alternativeName>
        <fullName evidence="1">7-cyano-7-carbaguanine synthase</fullName>
    </alternativeName>
    <alternativeName>
        <fullName evidence="1">PreQ(0) synthase</fullName>
    </alternativeName>
    <alternativeName>
        <fullName evidence="1">Queuosine biosynthesis protein QueC</fullName>
    </alternativeName>
</protein>
<dbReference type="EC" id="6.3.4.20" evidence="1"/>
<dbReference type="EMBL" id="AE014075">
    <property type="protein sequence ID" value="AAN79038.1"/>
    <property type="molecule type" value="Genomic_DNA"/>
</dbReference>
<dbReference type="RefSeq" id="WP_000817227.1">
    <property type="nucleotide sequence ID" value="NZ_CP051263.1"/>
</dbReference>
<dbReference type="SMR" id="Q8FKA4"/>
<dbReference type="STRING" id="199310.c0560"/>
<dbReference type="GeneID" id="86862989"/>
<dbReference type="KEGG" id="ecc:c0560"/>
<dbReference type="eggNOG" id="COG0603">
    <property type="taxonomic scope" value="Bacteria"/>
</dbReference>
<dbReference type="HOGENOM" id="CLU_081854_0_0_6"/>
<dbReference type="BioCyc" id="ECOL199310:C0560-MONOMER"/>
<dbReference type="UniPathway" id="UPA00391"/>
<dbReference type="Proteomes" id="UP000001410">
    <property type="component" value="Chromosome"/>
</dbReference>
<dbReference type="GO" id="GO:0005524">
    <property type="term" value="F:ATP binding"/>
    <property type="evidence" value="ECO:0007669"/>
    <property type="project" value="UniProtKB-UniRule"/>
</dbReference>
<dbReference type="GO" id="GO:0016879">
    <property type="term" value="F:ligase activity, forming carbon-nitrogen bonds"/>
    <property type="evidence" value="ECO:0007669"/>
    <property type="project" value="UniProtKB-UniRule"/>
</dbReference>
<dbReference type="GO" id="GO:0008270">
    <property type="term" value="F:zinc ion binding"/>
    <property type="evidence" value="ECO:0007669"/>
    <property type="project" value="UniProtKB-UniRule"/>
</dbReference>
<dbReference type="GO" id="GO:0008616">
    <property type="term" value="P:queuosine biosynthetic process"/>
    <property type="evidence" value="ECO:0007669"/>
    <property type="project" value="UniProtKB-UniRule"/>
</dbReference>
<dbReference type="CDD" id="cd01995">
    <property type="entry name" value="QueC-like"/>
    <property type="match status" value="1"/>
</dbReference>
<dbReference type="FunFam" id="3.40.50.620:FF:000017">
    <property type="entry name" value="7-cyano-7-deazaguanine synthase"/>
    <property type="match status" value="1"/>
</dbReference>
<dbReference type="Gene3D" id="3.40.50.620">
    <property type="entry name" value="HUPs"/>
    <property type="match status" value="1"/>
</dbReference>
<dbReference type="HAMAP" id="MF_01633">
    <property type="entry name" value="QueC"/>
    <property type="match status" value="1"/>
</dbReference>
<dbReference type="InterPro" id="IPR018317">
    <property type="entry name" value="QueC"/>
</dbReference>
<dbReference type="InterPro" id="IPR014729">
    <property type="entry name" value="Rossmann-like_a/b/a_fold"/>
</dbReference>
<dbReference type="NCBIfam" id="TIGR00364">
    <property type="entry name" value="7-cyano-7-deazaguanine synthase QueC"/>
    <property type="match status" value="1"/>
</dbReference>
<dbReference type="NCBIfam" id="NF008317">
    <property type="entry name" value="PRK11106.1"/>
    <property type="match status" value="1"/>
</dbReference>
<dbReference type="PANTHER" id="PTHR42914">
    <property type="entry name" value="7-CYANO-7-DEAZAGUANINE SYNTHASE"/>
    <property type="match status" value="1"/>
</dbReference>
<dbReference type="PANTHER" id="PTHR42914:SF1">
    <property type="entry name" value="7-CYANO-7-DEAZAGUANINE SYNTHASE"/>
    <property type="match status" value="1"/>
</dbReference>
<dbReference type="Pfam" id="PF06508">
    <property type="entry name" value="QueC"/>
    <property type="match status" value="1"/>
</dbReference>
<dbReference type="PIRSF" id="PIRSF006293">
    <property type="entry name" value="ExsB"/>
    <property type="match status" value="1"/>
</dbReference>
<dbReference type="SUPFAM" id="SSF52402">
    <property type="entry name" value="Adenine nucleotide alpha hydrolases-like"/>
    <property type="match status" value="1"/>
</dbReference>
<comment type="function">
    <text evidence="1">Catalyzes the ATP-dependent conversion of 7-carboxy-7-deazaguanine (CDG) to 7-cyano-7-deazaguanine (preQ(0)).</text>
</comment>
<comment type="catalytic activity">
    <reaction evidence="1">
        <text>7-carboxy-7-deazaguanine + NH4(+) + ATP = 7-cyano-7-deazaguanine + ADP + phosphate + H2O + H(+)</text>
        <dbReference type="Rhea" id="RHEA:27982"/>
        <dbReference type="ChEBI" id="CHEBI:15377"/>
        <dbReference type="ChEBI" id="CHEBI:15378"/>
        <dbReference type="ChEBI" id="CHEBI:28938"/>
        <dbReference type="ChEBI" id="CHEBI:30616"/>
        <dbReference type="ChEBI" id="CHEBI:43474"/>
        <dbReference type="ChEBI" id="CHEBI:45075"/>
        <dbReference type="ChEBI" id="CHEBI:61036"/>
        <dbReference type="ChEBI" id="CHEBI:456216"/>
        <dbReference type="EC" id="6.3.4.20"/>
    </reaction>
</comment>
<comment type="cofactor">
    <cofactor evidence="1">
        <name>Zn(2+)</name>
        <dbReference type="ChEBI" id="CHEBI:29105"/>
    </cofactor>
    <text evidence="1">Binds 1 zinc ion per subunit.</text>
</comment>
<comment type="pathway">
    <text evidence="1">Purine metabolism; 7-cyano-7-deazaguanine biosynthesis.</text>
</comment>
<comment type="similarity">
    <text evidence="1">Belongs to the QueC family.</text>
</comment>
<accession>Q8FKA4</accession>
<evidence type="ECO:0000255" key="1">
    <source>
        <dbReference type="HAMAP-Rule" id="MF_01633"/>
    </source>
</evidence>
<organism>
    <name type="scientific">Escherichia coli O6:H1 (strain CFT073 / ATCC 700928 / UPEC)</name>
    <dbReference type="NCBI Taxonomy" id="199310"/>
    <lineage>
        <taxon>Bacteria</taxon>
        <taxon>Pseudomonadati</taxon>
        <taxon>Pseudomonadota</taxon>
        <taxon>Gammaproteobacteria</taxon>
        <taxon>Enterobacterales</taxon>
        <taxon>Enterobacteriaceae</taxon>
        <taxon>Escherichia</taxon>
    </lineage>
</organism>